<name>NADK_BORBR</name>
<proteinExistence type="inferred from homology"/>
<reference key="1">
    <citation type="journal article" date="2003" name="Nat. Genet.">
        <title>Comparative analysis of the genome sequences of Bordetella pertussis, Bordetella parapertussis and Bordetella bronchiseptica.</title>
        <authorList>
            <person name="Parkhill J."/>
            <person name="Sebaihia M."/>
            <person name="Preston A."/>
            <person name="Murphy L.D."/>
            <person name="Thomson N.R."/>
            <person name="Harris D.E."/>
            <person name="Holden M.T.G."/>
            <person name="Churcher C.M."/>
            <person name="Bentley S.D."/>
            <person name="Mungall K.L."/>
            <person name="Cerdeno-Tarraga A.-M."/>
            <person name="Temple L."/>
            <person name="James K.D."/>
            <person name="Harris B."/>
            <person name="Quail M.A."/>
            <person name="Achtman M."/>
            <person name="Atkin R."/>
            <person name="Baker S."/>
            <person name="Basham D."/>
            <person name="Bason N."/>
            <person name="Cherevach I."/>
            <person name="Chillingworth T."/>
            <person name="Collins M."/>
            <person name="Cronin A."/>
            <person name="Davis P."/>
            <person name="Doggett J."/>
            <person name="Feltwell T."/>
            <person name="Goble A."/>
            <person name="Hamlin N."/>
            <person name="Hauser H."/>
            <person name="Holroyd S."/>
            <person name="Jagels K."/>
            <person name="Leather S."/>
            <person name="Moule S."/>
            <person name="Norberczak H."/>
            <person name="O'Neil S."/>
            <person name="Ormond D."/>
            <person name="Price C."/>
            <person name="Rabbinowitsch E."/>
            <person name="Rutter S."/>
            <person name="Sanders M."/>
            <person name="Saunders D."/>
            <person name="Seeger K."/>
            <person name="Sharp S."/>
            <person name="Simmonds M."/>
            <person name="Skelton J."/>
            <person name="Squares R."/>
            <person name="Squares S."/>
            <person name="Stevens K."/>
            <person name="Unwin L."/>
            <person name="Whitehead S."/>
            <person name="Barrell B.G."/>
            <person name="Maskell D.J."/>
        </authorList>
    </citation>
    <scope>NUCLEOTIDE SEQUENCE [LARGE SCALE GENOMIC DNA]</scope>
    <source>
        <strain>ATCC BAA-588 / NCTC 13252 / RB50</strain>
    </source>
</reference>
<dbReference type="EC" id="2.7.1.23" evidence="1"/>
<dbReference type="EMBL" id="BX640449">
    <property type="protein sequence ID" value="CAE34303.1"/>
    <property type="molecule type" value="Genomic_DNA"/>
</dbReference>
<dbReference type="RefSeq" id="WP_003814092.1">
    <property type="nucleotide sequence ID" value="NC_002927.3"/>
</dbReference>
<dbReference type="SMR" id="Q7WGH8"/>
<dbReference type="KEGG" id="bbr:BB3940"/>
<dbReference type="eggNOG" id="COG0061">
    <property type="taxonomic scope" value="Bacteria"/>
</dbReference>
<dbReference type="HOGENOM" id="CLU_008831_0_1_4"/>
<dbReference type="Proteomes" id="UP000001027">
    <property type="component" value="Chromosome"/>
</dbReference>
<dbReference type="GO" id="GO:0005737">
    <property type="term" value="C:cytoplasm"/>
    <property type="evidence" value="ECO:0007669"/>
    <property type="project" value="UniProtKB-SubCell"/>
</dbReference>
<dbReference type="GO" id="GO:0005524">
    <property type="term" value="F:ATP binding"/>
    <property type="evidence" value="ECO:0007669"/>
    <property type="project" value="UniProtKB-KW"/>
</dbReference>
<dbReference type="GO" id="GO:0046872">
    <property type="term" value="F:metal ion binding"/>
    <property type="evidence" value="ECO:0007669"/>
    <property type="project" value="UniProtKB-UniRule"/>
</dbReference>
<dbReference type="GO" id="GO:0051287">
    <property type="term" value="F:NAD binding"/>
    <property type="evidence" value="ECO:0007669"/>
    <property type="project" value="UniProtKB-ARBA"/>
</dbReference>
<dbReference type="GO" id="GO:0003951">
    <property type="term" value="F:NAD+ kinase activity"/>
    <property type="evidence" value="ECO:0007669"/>
    <property type="project" value="UniProtKB-UniRule"/>
</dbReference>
<dbReference type="GO" id="GO:0019674">
    <property type="term" value="P:NAD metabolic process"/>
    <property type="evidence" value="ECO:0007669"/>
    <property type="project" value="InterPro"/>
</dbReference>
<dbReference type="GO" id="GO:0006741">
    <property type="term" value="P:NADP biosynthetic process"/>
    <property type="evidence" value="ECO:0007669"/>
    <property type="project" value="UniProtKB-UniRule"/>
</dbReference>
<dbReference type="Gene3D" id="3.40.50.10330">
    <property type="entry name" value="Probable inorganic polyphosphate/atp-NAD kinase, domain 1"/>
    <property type="match status" value="1"/>
</dbReference>
<dbReference type="Gene3D" id="2.60.200.30">
    <property type="entry name" value="Probable inorganic polyphosphate/atp-NAD kinase, domain 2"/>
    <property type="match status" value="1"/>
</dbReference>
<dbReference type="HAMAP" id="MF_00361">
    <property type="entry name" value="NAD_kinase"/>
    <property type="match status" value="1"/>
</dbReference>
<dbReference type="InterPro" id="IPR017438">
    <property type="entry name" value="ATP-NAD_kinase_N"/>
</dbReference>
<dbReference type="InterPro" id="IPR017437">
    <property type="entry name" value="ATP-NAD_kinase_PpnK-typ_C"/>
</dbReference>
<dbReference type="InterPro" id="IPR016064">
    <property type="entry name" value="NAD/diacylglycerol_kinase_sf"/>
</dbReference>
<dbReference type="InterPro" id="IPR002504">
    <property type="entry name" value="NADK"/>
</dbReference>
<dbReference type="NCBIfam" id="NF002561">
    <property type="entry name" value="PRK02155.1"/>
    <property type="match status" value="1"/>
</dbReference>
<dbReference type="PANTHER" id="PTHR20275">
    <property type="entry name" value="NAD KINASE"/>
    <property type="match status" value="1"/>
</dbReference>
<dbReference type="PANTHER" id="PTHR20275:SF0">
    <property type="entry name" value="NAD KINASE"/>
    <property type="match status" value="1"/>
</dbReference>
<dbReference type="Pfam" id="PF01513">
    <property type="entry name" value="NAD_kinase"/>
    <property type="match status" value="1"/>
</dbReference>
<dbReference type="Pfam" id="PF20143">
    <property type="entry name" value="NAD_kinase_C"/>
    <property type="match status" value="1"/>
</dbReference>
<dbReference type="SUPFAM" id="SSF111331">
    <property type="entry name" value="NAD kinase/diacylglycerol kinase-like"/>
    <property type="match status" value="1"/>
</dbReference>
<comment type="function">
    <text evidence="1">Involved in the regulation of the intracellular balance of NAD and NADP, and is a key enzyme in the biosynthesis of NADP. Catalyzes specifically the phosphorylation on 2'-hydroxyl of the adenosine moiety of NAD to yield NADP.</text>
</comment>
<comment type="catalytic activity">
    <reaction evidence="1">
        <text>NAD(+) + ATP = ADP + NADP(+) + H(+)</text>
        <dbReference type="Rhea" id="RHEA:18629"/>
        <dbReference type="ChEBI" id="CHEBI:15378"/>
        <dbReference type="ChEBI" id="CHEBI:30616"/>
        <dbReference type="ChEBI" id="CHEBI:57540"/>
        <dbReference type="ChEBI" id="CHEBI:58349"/>
        <dbReference type="ChEBI" id="CHEBI:456216"/>
        <dbReference type="EC" id="2.7.1.23"/>
    </reaction>
</comment>
<comment type="cofactor">
    <cofactor evidence="1">
        <name>a divalent metal cation</name>
        <dbReference type="ChEBI" id="CHEBI:60240"/>
    </cofactor>
</comment>
<comment type="subcellular location">
    <subcellularLocation>
        <location evidence="1">Cytoplasm</location>
    </subcellularLocation>
</comment>
<comment type="similarity">
    <text evidence="1">Belongs to the NAD kinase family.</text>
</comment>
<organism>
    <name type="scientific">Bordetella bronchiseptica (strain ATCC BAA-588 / NCTC 13252 / RB50)</name>
    <name type="common">Alcaligenes bronchisepticus</name>
    <dbReference type="NCBI Taxonomy" id="257310"/>
    <lineage>
        <taxon>Bacteria</taxon>
        <taxon>Pseudomonadati</taxon>
        <taxon>Pseudomonadota</taxon>
        <taxon>Betaproteobacteria</taxon>
        <taxon>Burkholderiales</taxon>
        <taxon>Alcaligenaceae</taxon>
        <taxon>Bordetella</taxon>
    </lineage>
</organism>
<evidence type="ECO:0000255" key="1">
    <source>
        <dbReference type="HAMAP-Rule" id="MF_00361"/>
    </source>
</evidence>
<sequence>MYFPIVALIGRYQDTGLDAPLTALAQMLTQAGRRVLVEAETARNAGVSGYPVADWDEIGRTATLAVVMGGDGTVLGAARHLAPYGVPLIGINHGRLGFITDIPLQDAHDALGRVLEGNYQAEDRMLLQGGVWRGEQQMYSASAVNDVVLNRAGRGGMIEVRVELDGAFMYTQRADGLIIATPTGSTAYSLSANGPILHPGMNAMVLVPVAPQTLSNRPIVIPDSGVLNMTLTAMGRVEIGASVHFDMQTWSDLQPGDRITVQRAPHTIRFVHPEGYSFFSTLRRKLHWNLMPQATDNLE</sequence>
<keyword id="KW-0067">ATP-binding</keyword>
<keyword id="KW-0963">Cytoplasm</keyword>
<keyword id="KW-0418">Kinase</keyword>
<keyword id="KW-0520">NAD</keyword>
<keyword id="KW-0521">NADP</keyword>
<keyword id="KW-0547">Nucleotide-binding</keyword>
<keyword id="KW-0808">Transferase</keyword>
<protein>
    <recommendedName>
        <fullName evidence="1">NAD kinase</fullName>
        <ecNumber evidence="1">2.7.1.23</ecNumber>
    </recommendedName>
    <alternativeName>
        <fullName evidence="1">ATP-dependent NAD kinase</fullName>
    </alternativeName>
</protein>
<feature type="chain" id="PRO_0000229613" description="NAD kinase">
    <location>
        <begin position="1"/>
        <end position="299"/>
    </location>
</feature>
<feature type="active site" description="Proton acceptor" evidence="1">
    <location>
        <position position="71"/>
    </location>
</feature>
<feature type="binding site" evidence="1">
    <location>
        <begin position="71"/>
        <end position="72"/>
    </location>
    <ligand>
        <name>NAD(+)</name>
        <dbReference type="ChEBI" id="CHEBI:57540"/>
    </ligand>
</feature>
<feature type="binding site" evidence="1">
    <location>
        <begin position="145"/>
        <end position="146"/>
    </location>
    <ligand>
        <name>NAD(+)</name>
        <dbReference type="ChEBI" id="CHEBI:57540"/>
    </ligand>
</feature>
<feature type="binding site" evidence="1">
    <location>
        <position position="173"/>
    </location>
    <ligand>
        <name>NAD(+)</name>
        <dbReference type="ChEBI" id="CHEBI:57540"/>
    </ligand>
</feature>
<feature type="binding site" evidence="1">
    <location>
        <position position="175"/>
    </location>
    <ligand>
        <name>NAD(+)</name>
        <dbReference type="ChEBI" id="CHEBI:57540"/>
    </ligand>
</feature>
<feature type="binding site" evidence="1">
    <location>
        <begin position="186"/>
        <end position="191"/>
    </location>
    <ligand>
        <name>NAD(+)</name>
        <dbReference type="ChEBI" id="CHEBI:57540"/>
    </ligand>
</feature>
<feature type="binding site" evidence="1">
    <location>
        <position position="210"/>
    </location>
    <ligand>
        <name>NAD(+)</name>
        <dbReference type="ChEBI" id="CHEBI:57540"/>
    </ligand>
</feature>
<feature type="binding site" evidence="1">
    <location>
        <position position="248"/>
    </location>
    <ligand>
        <name>NAD(+)</name>
        <dbReference type="ChEBI" id="CHEBI:57540"/>
    </ligand>
</feature>
<accession>Q7WGH8</accession>
<gene>
    <name evidence="1" type="primary">nadK</name>
    <name type="ordered locus">BB3940</name>
</gene>